<accession>Q9FJ79</accession>
<dbReference type="EC" id="5.6.2.1" evidence="4"/>
<dbReference type="EMBL" id="AB015479">
    <property type="protein sequence ID" value="BAB08548.1"/>
    <property type="molecule type" value="Genomic_DNA"/>
</dbReference>
<dbReference type="EMBL" id="CP002688">
    <property type="protein sequence ID" value="AED96615.1"/>
    <property type="molecule type" value="Genomic_DNA"/>
</dbReference>
<dbReference type="EMBL" id="AK226832">
    <property type="protein sequence ID" value="BAE98926.1"/>
    <property type="molecule type" value="mRNA"/>
</dbReference>
<dbReference type="RefSeq" id="NP_200342.1">
    <property type="nucleotide sequence ID" value="NM_124913.4"/>
</dbReference>
<dbReference type="SMR" id="Q9FJ79"/>
<dbReference type="FunCoup" id="Q9FJ79">
    <property type="interactions" value="2840"/>
</dbReference>
<dbReference type="STRING" id="3702.Q9FJ79"/>
<dbReference type="iPTMnet" id="Q9FJ79"/>
<dbReference type="PaxDb" id="3702-AT5G55310.1"/>
<dbReference type="ProteomicsDB" id="232439"/>
<dbReference type="EnsemblPlants" id="AT5G55310.1">
    <property type="protein sequence ID" value="AT5G55310.1"/>
    <property type="gene ID" value="AT5G55310"/>
</dbReference>
<dbReference type="GeneID" id="835624"/>
<dbReference type="Gramene" id="AT5G55310.1">
    <property type="protein sequence ID" value="AT5G55310.1"/>
    <property type="gene ID" value="AT5G55310"/>
</dbReference>
<dbReference type="KEGG" id="ath:AT5G55310"/>
<dbReference type="Araport" id="AT5G55310"/>
<dbReference type="TAIR" id="AT5G55310">
    <property type="gene designation" value="TOP1BETA"/>
</dbReference>
<dbReference type="eggNOG" id="KOG0981">
    <property type="taxonomic scope" value="Eukaryota"/>
</dbReference>
<dbReference type="HOGENOM" id="CLU_009193_1_2_1"/>
<dbReference type="InParanoid" id="Q9FJ79"/>
<dbReference type="OMA" id="GECPVTT"/>
<dbReference type="PhylomeDB" id="Q9FJ79"/>
<dbReference type="CD-CODE" id="4299E36E">
    <property type="entry name" value="Nucleolus"/>
</dbReference>
<dbReference type="PRO" id="PR:Q9FJ79"/>
<dbReference type="Proteomes" id="UP000006548">
    <property type="component" value="Chromosome 5"/>
</dbReference>
<dbReference type="ExpressionAtlas" id="Q9FJ79">
    <property type="expression patterns" value="baseline and differential"/>
</dbReference>
<dbReference type="GO" id="GO:0005694">
    <property type="term" value="C:chromosome"/>
    <property type="evidence" value="ECO:0007669"/>
    <property type="project" value="InterPro"/>
</dbReference>
<dbReference type="GO" id="GO:0005634">
    <property type="term" value="C:nucleus"/>
    <property type="evidence" value="ECO:0007669"/>
    <property type="project" value="UniProtKB-SubCell"/>
</dbReference>
<dbReference type="GO" id="GO:0003677">
    <property type="term" value="F:DNA binding"/>
    <property type="evidence" value="ECO:0007669"/>
    <property type="project" value="UniProtKB-KW"/>
</dbReference>
<dbReference type="GO" id="GO:0003917">
    <property type="term" value="F:DNA topoisomerase type I (single strand cut, ATP-independent) activity"/>
    <property type="evidence" value="ECO:0000250"/>
    <property type="project" value="TAIR"/>
</dbReference>
<dbReference type="GO" id="GO:0006265">
    <property type="term" value="P:DNA topological change"/>
    <property type="evidence" value="ECO:0000305"/>
    <property type="project" value="TAIR"/>
</dbReference>
<dbReference type="CDD" id="cd00659">
    <property type="entry name" value="Topo_IB_C"/>
    <property type="match status" value="1"/>
</dbReference>
<dbReference type="FunFam" id="1.10.10.41:FF:000001">
    <property type="entry name" value="DNA topoisomerase I"/>
    <property type="match status" value="1"/>
</dbReference>
<dbReference type="FunFam" id="1.10.132.10:FF:000002">
    <property type="entry name" value="DNA topoisomerase I"/>
    <property type="match status" value="1"/>
</dbReference>
<dbReference type="FunFam" id="2.170.11.10:FF:000001">
    <property type="entry name" value="DNA topoisomerase I"/>
    <property type="match status" value="1"/>
</dbReference>
<dbReference type="FunFam" id="3.90.15.10:FF:000003">
    <property type="entry name" value="DNA topoisomerase I"/>
    <property type="match status" value="1"/>
</dbReference>
<dbReference type="Gene3D" id="1.10.132.10">
    <property type="match status" value="1"/>
</dbReference>
<dbReference type="Gene3D" id="2.170.11.10">
    <property type="entry name" value="DNA Topoisomerase I, domain 2"/>
    <property type="match status" value="1"/>
</dbReference>
<dbReference type="Gene3D" id="3.90.15.10">
    <property type="entry name" value="Topoisomerase I, Chain A, domain 3"/>
    <property type="match status" value="1"/>
</dbReference>
<dbReference type="Gene3D" id="1.10.10.41">
    <property type="entry name" value="Yeast DNA topoisomerase - domain 1"/>
    <property type="match status" value="1"/>
</dbReference>
<dbReference type="InterPro" id="IPR011010">
    <property type="entry name" value="DNA_brk_join_enz"/>
</dbReference>
<dbReference type="InterPro" id="IPR013034">
    <property type="entry name" value="DNA_topo_DNA_db_N_dom1"/>
</dbReference>
<dbReference type="InterPro" id="IPR013030">
    <property type="entry name" value="DNA_topo_DNA_db_N_dom2"/>
</dbReference>
<dbReference type="InterPro" id="IPR001631">
    <property type="entry name" value="TopoI"/>
</dbReference>
<dbReference type="InterPro" id="IPR025834">
    <property type="entry name" value="TopoI_C_dom"/>
</dbReference>
<dbReference type="InterPro" id="IPR014711">
    <property type="entry name" value="TopoI_cat_a-hlx-sub_euk"/>
</dbReference>
<dbReference type="InterPro" id="IPR014727">
    <property type="entry name" value="TopoI_cat_a/b-sub_euk"/>
</dbReference>
<dbReference type="InterPro" id="IPR013500">
    <property type="entry name" value="TopoI_cat_euk"/>
</dbReference>
<dbReference type="InterPro" id="IPR008336">
    <property type="entry name" value="TopoI_DNA-bd_euk"/>
</dbReference>
<dbReference type="InterPro" id="IPR036202">
    <property type="entry name" value="TopoI_DNA-bd_euk_N_sf"/>
</dbReference>
<dbReference type="InterPro" id="IPR013499">
    <property type="entry name" value="TopoI_euk"/>
</dbReference>
<dbReference type="InterPro" id="IPR018521">
    <property type="entry name" value="TopoIB_AS"/>
</dbReference>
<dbReference type="InterPro" id="IPR051062">
    <property type="entry name" value="Topoisomerase_IB"/>
</dbReference>
<dbReference type="PANTHER" id="PTHR10290:SF23">
    <property type="entry name" value="DNA TOPOISOMERASE 1 BETA"/>
    <property type="match status" value="1"/>
</dbReference>
<dbReference type="PANTHER" id="PTHR10290">
    <property type="entry name" value="DNA TOPOISOMERASE I"/>
    <property type="match status" value="1"/>
</dbReference>
<dbReference type="Pfam" id="PF14370">
    <property type="entry name" value="Topo_C_assoc"/>
    <property type="match status" value="1"/>
</dbReference>
<dbReference type="Pfam" id="PF01028">
    <property type="entry name" value="Topoisom_I"/>
    <property type="match status" value="1"/>
</dbReference>
<dbReference type="Pfam" id="PF02919">
    <property type="entry name" value="Topoisom_I_N"/>
    <property type="match status" value="1"/>
</dbReference>
<dbReference type="PRINTS" id="PR00416">
    <property type="entry name" value="EUTPISMRASEI"/>
</dbReference>
<dbReference type="SMART" id="SM00435">
    <property type="entry name" value="TOPEUc"/>
    <property type="match status" value="1"/>
</dbReference>
<dbReference type="SUPFAM" id="SSF56349">
    <property type="entry name" value="DNA breaking-rejoining enzymes"/>
    <property type="match status" value="1"/>
</dbReference>
<dbReference type="SUPFAM" id="SSF56741">
    <property type="entry name" value="Eukaryotic DNA topoisomerase I, N-terminal DNA-binding fragment"/>
    <property type="match status" value="1"/>
</dbReference>
<dbReference type="PROSITE" id="PS00176">
    <property type="entry name" value="TOPO_IB_1"/>
    <property type="match status" value="1"/>
</dbReference>
<dbReference type="PROSITE" id="PS52038">
    <property type="entry name" value="TOPO_IB_2"/>
    <property type="match status" value="1"/>
</dbReference>
<organism>
    <name type="scientific">Arabidopsis thaliana</name>
    <name type="common">Mouse-ear cress</name>
    <dbReference type="NCBI Taxonomy" id="3702"/>
    <lineage>
        <taxon>Eukaryota</taxon>
        <taxon>Viridiplantae</taxon>
        <taxon>Streptophyta</taxon>
        <taxon>Embryophyta</taxon>
        <taxon>Tracheophyta</taxon>
        <taxon>Spermatophyta</taxon>
        <taxon>Magnoliopsida</taxon>
        <taxon>eudicotyledons</taxon>
        <taxon>Gunneridae</taxon>
        <taxon>Pentapetalae</taxon>
        <taxon>rosids</taxon>
        <taxon>malvids</taxon>
        <taxon>Brassicales</taxon>
        <taxon>Brassicaceae</taxon>
        <taxon>Camelineae</taxon>
        <taxon>Arabidopsis</taxon>
    </lineage>
</organism>
<evidence type="ECO:0000250" key="1">
    <source>
        <dbReference type="UniProtKB" id="P11387"/>
    </source>
</evidence>
<evidence type="ECO:0000255" key="2"/>
<evidence type="ECO:0000255" key="3">
    <source>
        <dbReference type="PROSITE-ProRule" id="PRU01382"/>
    </source>
</evidence>
<evidence type="ECO:0000255" key="4">
    <source>
        <dbReference type="PROSITE-ProRule" id="PRU10130"/>
    </source>
</evidence>
<evidence type="ECO:0000256" key="5">
    <source>
        <dbReference type="SAM" id="MobiDB-lite"/>
    </source>
</evidence>
<evidence type="ECO:0000269" key="6">
    <source>
    </source>
</evidence>
<evidence type="ECO:0000303" key="7">
    <source>
    </source>
</evidence>
<evidence type="ECO:0000305" key="8"/>
<evidence type="ECO:0000312" key="9">
    <source>
        <dbReference type="Araport" id="AT5G55310"/>
    </source>
</evidence>
<evidence type="ECO:0000312" key="10">
    <source>
        <dbReference type="EMBL" id="BAB08548.1"/>
    </source>
</evidence>
<evidence type="ECO:0007744" key="11">
    <source>
    </source>
</evidence>
<sequence length="917" mass="103054">MATEAFVKPVVPNGHDGYEDEDEDDIPLVFKRNSNTAATTNRPSPINNAMRNSAIGSTKSSPPMRSPLTSPNRSASSSTRSSMMKPALPSSSSVQRSTLKSPLRDDRSVVAKERNGFGKAPSVSKSDDEDSEDDKPLSARLKLDSKEVTKQPSSSGRGSTQQAVQKSNMRPQGLSDYTKKKVLDERAPMSSTVQTKTSVGTSSSKPVHIEQKRPLVNNIDRNGLKPKTEGHSSQAPAKRPLEKGSSSNQSSVKRPKLSEPARPVKVEQGSHISATQDAKGKNLDASKPLRANQATVKEDNSDGDDHVPIASRMKSDSSNNKSSSAKPSSSKMIASSSRTIAQKPNKWVKDSKYSKSSKSLPSGDGQKKWKTLQHNGVIFPPPYKRHGVKILFQGKPVDLTPEQEEVATMFAVMRETEYYKKPKFRENFWNDWRKLLGKNHMIKSLDDCDFTPIYEWYMQEKETKKQMTAEEKRIVKEEKLKQEEKYMWAVLDGVRERIGNFRVEPPGLFRGRGEHPKMGKLKKRIRPCDITINIGKEAPIPECPIPGERWKEVKHDNTVTWLAFWSDPINPKEFKYVFLAASSSLKGQSDKEKYEKARKLHNHIGSIRAAYTKDFNNKDVTKRQIAVATYLIDKLALRAGNEKDDDEADTVGCCTLKVGNVECIPPNKLKFDFLGKDSIQYVNTVEVEPLVYKAIGQFQAGKSKTDDLFDELDTSKLNTHLKELMAGLTAKVFRTYNASITLDLMLSKETRDGDVPEKVVVYQQANKEVAIICNHQRTVSKSHGAQVEKLAVKIEELREQIKELNIDLDRAKKGRTPLMGSDGKRKRNLTPEALEKKIMQTQGKIEKMERDMQTKEDMKTVALGTSKINYMDPRITVAWCKRHDVPIEKIFNKSLLAKFAWAMDVDPEFRFCSSTDE</sequence>
<proteinExistence type="evidence at protein level"/>
<comment type="function">
    <text evidence="1 6">Releases the supercoiling and torsional tension of DNA introduced during the DNA replication and transcription by transiently cleaving and rejoining one strand of the DNA duplex. Introduces a single-strand break via transesterification at a target site in duplex DNA. The scissile phosphodiester is attacked by the catalytic tyrosine of the enzyme, resulting in the formation of a DNA-(3'-phosphotyrosyl)-enzyme intermediate and the expulsion of a 5'-OH DNA strand. The free DNA strand then rotates around the intact phosphodiester bond on the opposing strand, thus removing DNA supercoils. Finally, in the religation step, the DNA 5'-OH attacks the covalent intermediate to expel the active-site tyrosine and restore the DNA phosphodiester backbone (By similarity). Topoisomerases 1 enzymes (TOP1A and TOP1B) are essential for plant survival (PubMed:12215507).</text>
</comment>
<comment type="catalytic activity">
    <reaction evidence="4">
        <text>ATP-independent breakage of single-stranded DNA, followed by passage and rejoining.</text>
        <dbReference type="EC" id="5.6.2.1"/>
    </reaction>
</comment>
<comment type="subcellular location">
    <subcellularLocation>
        <location evidence="8">Nucleus</location>
    </subcellularLocation>
</comment>
<comment type="similarity">
    <text evidence="8">Belongs to the type IB topoisomerase family.</text>
</comment>
<feature type="chain" id="PRO_0000438099" description="DNA topoisomerase 1 beta">
    <location>
        <begin position="1"/>
        <end position="917"/>
    </location>
</feature>
<feature type="domain" description="Topo IB-type catalytic" evidence="3">
    <location>
        <begin position="582"/>
        <end position="912"/>
    </location>
</feature>
<feature type="region of interest" description="Disordered" evidence="5">
    <location>
        <begin position="1"/>
        <end position="368"/>
    </location>
</feature>
<feature type="region of interest" description="Interaction with DNA" evidence="1">
    <location>
        <begin position="575"/>
        <end position="576"/>
    </location>
</feature>
<feature type="region of interest" description="Interaction with DNA" evidence="1">
    <location>
        <begin position="638"/>
        <end position="643"/>
    </location>
</feature>
<feature type="region of interest" description="Interaction with DNA" evidence="1">
    <location>
        <begin position="729"/>
        <end position="731"/>
    </location>
</feature>
<feature type="coiled-coil region" evidence="2">
    <location>
        <begin position="779"/>
        <end position="858"/>
    </location>
</feature>
<feature type="compositionally biased region" description="Polar residues" evidence="5">
    <location>
        <begin position="32"/>
        <end position="63"/>
    </location>
</feature>
<feature type="compositionally biased region" description="Low complexity" evidence="5">
    <location>
        <begin position="66"/>
        <end position="82"/>
    </location>
</feature>
<feature type="compositionally biased region" description="Polar residues" evidence="5">
    <location>
        <begin position="89"/>
        <end position="100"/>
    </location>
</feature>
<feature type="compositionally biased region" description="Basic and acidic residues" evidence="5">
    <location>
        <begin position="102"/>
        <end position="116"/>
    </location>
</feature>
<feature type="compositionally biased region" description="Basic and acidic residues" evidence="5">
    <location>
        <begin position="134"/>
        <end position="149"/>
    </location>
</feature>
<feature type="compositionally biased region" description="Polar residues" evidence="5">
    <location>
        <begin position="150"/>
        <end position="170"/>
    </location>
</feature>
<feature type="compositionally biased region" description="Basic and acidic residues" evidence="5">
    <location>
        <begin position="177"/>
        <end position="187"/>
    </location>
</feature>
<feature type="compositionally biased region" description="Polar residues" evidence="5">
    <location>
        <begin position="189"/>
        <end position="205"/>
    </location>
</feature>
<feature type="compositionally biased region" description="Basic and acidic residues" evidence="5">
    <location>
        <begin position="256"/>
        <end position="265"/>
    </location>
</feature>
<feature type="compositionally biased region" description="Basic and acidic residues" evidence="5">
    <location>
        <begin position="296"/>
        <end position="307"/>
    </location>
</feature>
<feature type="compositionally biased region" description="Low complexity" evidence="5">
    <location>
        <begin position="316"/>
        <end position="338"/>
    </location>
</feature>
<feature type="active site" description="O-(3'-phospho-DNA)-tyrosine intermediate" evidence="3 4">
    <location>
        <position position="870"/>
    </location>
</feature>
<feature type="site" description="Interaction with DNA" evidence="1">
    <location>
        <position position="464"/>
    </location>
</feature>
<feature type="site" description="Interaction with DNA" evidence="1">
    <location>
        <position position="512"/>
    </location>
</feature>
<feature type="site" description="Interaction with DNA" evidence="1">
    <location>
        <position position="561"/>
    </location>
</feature>
<feature type="site" description="Interaction with DNA" evidence="1">
    <location>
        <position position="593"/>
    </location>
</feature>
<feature type="site" description="Interaction with DNA" evidence="1">
    <location>
        <position position="650"/>
    </location>
</feature>
<feature type="site" description="Interaction with DNA" evidence="1">
    <location>
        <position position="676"/>
    </location>
</feature>
<feature type="site" description="Interaction with DNA" evidence="1">
    <location>
        <position position="718"/>
    </location>
</feature>
<feature type="site" description="Interaction with DNA" evidence="1">
    <location>
        <position position="775"/>
    </location>
</feature>
<feature type="site" description="Interaction with DNA" evidence="1">
    <location>
        <position position="793"/>
    </location>
</feature>
<feature type="modified residue" description="Phosphoserine" evidence="11">
    <location>
        <position position="301"/>
    </location>
</feature>
<gene>
    <name evidence="8" type="primary">TOP1B</name>
    <name evidence="8" type="synonym">TOP1</name>
    <name evidence="7" type="synonym">TOP1BETA</name>
    <name evidence="9" type="ordered locus">At5g55310</name>
    <name evidence="10" type="ORF">MTE17.2</name>
</gene>
<name>TOP1B_ARATH</name>
<protein>
    <recommendedName>
        <fullName evidence="8">DNA topoisomerase 1 beta</fullName>
        <ecNumber evidence="4">5.6.2.1</ecNumber>
    </recommendedName>
    <alternativeName>
        <fullName evidence="8">DNA topoisomerase 1</fullName>
    </alternativeName>
</protein>
<reference key="1">
    <citation type="journal article" date="1998" name="DNA Res.">
        <title>Structural analysis of Arabidopsis thaliana chromosome 5. VII. Sequence features of the regions of 1,013,767 bp covered by sixteen physically assigned P1 and TAC clones.</title>
        <authorList>
            <person name="Nakamura Y."/>
            <person name="Sato S."/>
            <person name="Asamizu E."/>
            <person name="Kaneko T."/>
            <person name="Kotani H."/>
            <person name="Miyajima N."/>
            <person name="Tabata S."/>
        </authorList>
    </citation>
    <scope>NUCLEOTIDE SEQUENCE [LARGE SCALE GENOMIC DNA]</scope>
    <source>
        <strain>cv. Columbia</strain>
    </source>
</reference>
<reference key="2">
    <citation type="journal article" date="2017" name="Plant J.">
        <title>Araport11: a complete reannotation of the Arabidopsis thaliana reference genome.</title>
        <authorList>
            <person name="Cheng C.Y."/>
            <person name="Krishnakumar V."/>
            <person name="Chan A.P."/>
            <person name="Thibaud-Nissen F."/>
            <person name="Schobel S."/>
            <person name="Town C.D."/>
        </authorList>
    </citation>
    <scope>GENOME REANNOTATION</scope>
    <source>
        <strain>cv. Columbia</strain>
    </source>
</reference>
<reference key="3">
    <citation type="submission" date="2006-07" db="EMBL/GenBank/DDBJ databases">
        <title>Large-scale analysis of RIKEN Arabidopsis full-length (RAFL) cDNAs.</title>
        <authorList>
            <person name="Totoki Y."/>
            <person name="Seki M."/>
            <person name="Ishida J."/>
            <person name="Nakajima M."/>
            <person name="Enju A."/>
            <person name="Kamiya A."/>
            <person name="Narusaka M."/>
            <person name="Shin-i T."/>
            <person name="Nakagawa M."/>
            <person name="Sakamoto N."/>
            <person name="Oishi K."/>
            <person name="Kohara Y."/>
            <person name="Kobayashi M."/>
            <person name="Toyoda A."/>
            <person name="Sakaki Y."/>
            <person name="Sakurai T."/>
            <person name="Iida K."/>
            <person name="Akiyama K."/>
            <person name="Satou M."/>
            <person name="Toyoda T."/>
            <person name="Konagaya A."/>
            <person name="Carninci P."/>
            <person name="Kawai J."/>
            <person name="Hayashizaki Y."/>
            <person name="Shinozaki K."/>
        </authorList>
    </citation>
    <scope>NUCLEOTIDE SEQUENCE [LARGE SCALE MRNA]</scope>
    <source>
        <strain>cv. Columbia</strain>
    </source>
</reference>
<reference key="4">
    <citation type="journal article" date="2002" name="Plant Cell">
        <title>Disruption of a DNA topoisomerase I gene affects morphogenesis in Arabidopsis.</title>
        <authorList>
            <person name="Takahashi T."/>
            <person name="Matsuhara S."/>
            <person name="Abe M."/>
            <person name="Komeda Y."/>
        </authorList>
    </citation>
    <scope>FUNCTION</scope>
</reference>
<reference key="5">
    <citation type="journal article" date="2009" name="Plant Physiol.">
        <title>Large-scale Arabidopsis phosphoproteome profiling reveals novel chloroplast kinase substrates and phosphorylation networks.</title>
        <authorList>
            <person name="Reiland S."/>
            <person name="Messerli G."/>
            <person name="Baerenfaller K."/>
            <person name="Gerrits B."/>
            <person name="Endler A."/>
            <person name="Grossmann J."/>
            <person name="Gruissem W."/>
            <person name="Baginsky S."/>
        </authorList>
    </citation>
    <scope>PHOSPHORYLATION [LARGE SCALE ANALYSIS] AT SER-301</scope>
    <scope>IDENTIFICATION BY MASS SPECTROMETRY [LARGE SCALE ANALYSIS]</scope>
</reference>
<keyword id="KW-0175">Coiled coil</keyword>
<keyword id="KW-0238">DNA-binding</keyword>
<keyword id="KW-0413">Isomerase</keyword>
<keyword id="KW-0539">Nucleus</keyword>
<keyword id="KW-0597">Phosphoprotein</keyword>
<keyword id="KW-1185">Reference proteome</keyword>
<keyword id="KW-0799">Topoisomerase</keyword>